<comment type="function">
    <text evidence="1">Could be involved in insertion of integral membrane proteins into the membrane.</text>
</comment>
<comment type="subcellular location">
    <subcellularLocation>
        <location evidence="1">Cell inner membrane</location>
        <topology evidence="1">Peripheral membrane protein</topology>
        <orientation evidence="1">Cytoplasmic side</orientation>
    </subcellularLocation>
</comment>
<comment type="similarity">
    <text evidence="1">Belongs to the UPF0161 family.</text>
</comment>
<comment type="sequence caution" evidence="2">
    <conflict type="erroneous initiation">
        <sequence resource="EMBL-CDS" id="ABB26547"/>
    </conflict>
</comment>
<feature type="chain" id="PRO_0000253187" description="Putative membrane protein insertion efficiency factor">
    <location>
        <begin position="1"/>
        <end position="92"/>
    </location>
</feature>
<accession>Q3AWW6</accession>
<protein>
    <recommendedName>
        <fullName evidence="1">Putative membrane protein insertion efficiency factor</fullName>
    </recommendedName>
</protein>
<proteinExistence type="inferred from homology"/>
<reference key="1">
    <citation type="submission" date="2005-08" db="EMBL/GenBank/DDBJ databases">
        <title>Complete sequence of Synechococcus sp. CC9902.</title>
        <authorList>
            <person name="Copeland A."/>
            <person name="Lucas S."/>
            <person name="Lapidus A."/>
            <person name="Barry K."/>
            <person name="Detter J.C."/>
            <person name="Glavina T."/>
            <person name="Hammon N."/>
            <person name="Israni S."/>
            <person name="Pitluck S."/>
            <person name="Martinez M."/>
            <person name="Schmutz J."/>
            <person name="Larimer F."/>
            <person name="Land M."/>
            <person name="Kyrpides N."/>
            <person name="Ivanova N."/>
            <person name="Richardson P."/>
        </authorList>
    </citation>
    <scope>NUCLEOTIDE SEQUENCE [LARGE SCALE GENOMIC DNA]</scope>
    <source>
        <strain>CC9902</strain>
    </source>
</reference>
<keyword id="KW-0997">Cell inner membrane</keyword>
<keyword id="KW-1003">Cell membrane</keyword>
<keyword id="KW-0472">Membrane</keyword>
<keyword id="KW-1185">Reference proteome</keyword>
<evidence type="ECO:0000255" key="1">
    <source>
        <dbReference type="HAMAP-Rule" id="MF_00386"/>
    </source>
</evidence>
<evidence type="ECO:0000305" key="2"/>
<name>YIDD_SYNS9</name>
<gene>
    <name type="ordered locus">Syncc9902_1589</name>
</gene>
<sequence>MHESPILSNGDQPNRWAGLNRRVAALLLALIGFYRTFISPLLGPRCRFTPTCSAYGLEAIQRHGPWRGGWLTLKRVLRCHPFTPCGCDPVPD</sequence>
<dbReference type="EMBL" id="CP000097">
    <property type="protein sequence ID" value="ABB26547.1"/>
    <property type="status" value="ALT_INIT"/>
    <property type="molecule type" value="Genomic_DNA"/>
</dbReference>
<dbReference type="RefSeq" id="WP_041425480.1">
    <property type="nucleotide sequence ID" value="NC_007513.1"/>
</dbReference>
<dbReference type="STRING" id="316279.Syncc9902_1589"/>
<dbReference type="KEGG" id="sye:Syncc9902_1589"/>
<dbReference type="eggNOG" id="COG0759">
    <property type="taxonomic scope" value="Bacteria"/>
</dbReference>
<dbReference type="HOGENOM" id="CLU_144811_6_1_3"/>
<dbReference type="OrthoDB" id="9801753at2"/>
<dbReference type="Proteomes" id="UP000002712">
    <property type="component" value="Chromosome"/>
</dbReference>
<dbReference type="GO" id="GO:0005886">
    <property type="term" value="C:plasma membrane"/>
    <property type="evidence" value="ECO:0007669"/>
    <property type="project" value="UniProtKB-SubCell"/>
</dbReference>
<dbReference type="HAMAP" id="MF_00386">
    <property type="entry name" value="UPF0161_YidD"/>
    <property type="match status" value="1"/>
</dbReference>
<dbReference type="InterPro" id="IPR002696">
    <property type="entry name" value="Membr_insert_effic_factor_YidD"/>
</dbReference>
<dbReference type="NCBIfam" id="TIGR00278">
    <property type="entry name" value="membrane protein insertion efficiency factor YidD"/>
    <property type="match status" value="1"/>
</dbReference>
<dbReference type="PANTHER" id="PTHR33383">
    <property type="entry name" value="MEMBRANE PROTEIN INSERTION EFFICIENCY FACTOR-RELATED"/>
    <property type="match status" value="1"/>
</dbReference>
<dbReference type="PANTHER" id="PTHR33383:SF1">
    <property type="entry name" value="MEMBRANE PROTEIN INSERTION EFFICIENCY FACTOR-RELATED"/>
    <property type="match status" value="1"/>
</dbReference>
<dbReference type="Pfam" id="PF01809">
    <property type="entry name" value="YidD"/>
    <property type="match status" value="1"/>
</dbReference>
<dbReference type="SMART" id="SM01234">
    <property type="entry name" value="Haemolytic"/>
    <property type="match status" value="1"/>
</dbReference>
<organism>
    <name type="scientific">Synechococcus sp. (strain CC9902)</name>
    <dbReference type="NCBI Taxonomy" id="316279"/>
    <lineage>
        <taxon>Bacteria</taxon>
        <taxon>Bacillati</taxon>
        <taxon>Cyanobacteriota</taxon>
        <taxon>Cyanophyceae</taxon>
        <taxon>Synechococcales</taxon>
        <taxon>Synechococcaceae</taxon>
        <taxon>Synechococcus</taxon>
    </lineage>
</organism>